<gene>
    <name evidence="1" type="primary">psb30</name>
    <name evidence="1" type="synonym">ycf12</name>
</gene>
<reference key="1">
    <citation type="journal article" date="2005" name="Mol. Biol. Evol.">
        <title>The chloroplast genome sequence of the green alga Pseudendoclonium akinetum (Ulvophyceae) reveals unusual structural features and new insights into the branching order of chlorophyte lineages.</title>
        <authorList>
            <person name="Pombert J.-F."/>
            <person name="Otis C."/>
            <person name="Lemieux C."/>
            <person name="Turmel M."/>
        </authorList>
    </citation>
    <scope>NUCLEOTIDE SEQUENCE [LARGE SCALE GENOMIC DNA]</scope>
    <source>
        <strain>UTEX 1912</strain>
    </source>
</reference>
<dbReference type="EMBL" id="AY835431">
    <property type="protein sequence ID" value="AAV80672.1"/>
    <property type="molecule type" value="Genomic_DNA"/>
</dbReference>
<dbReference type="RefSeq" id="YP_636250.1">
    <property type="nucleotide sequence ID" value="NC_008114.1"/>
</dbReference>
<dbReference type="SMR" id="Q3ZJ17"/>
<dbReference type="GeneID" id="4108716"/>
<dbReference type="GO" id="GO:0009535">
    <property type="term" value="C:chloroplast thylakoid membrane"/>
    <property type="evidence" value="ECO:0007669"/>
    <property type="project" value="UniProtKB-SubCell"/>
</dbReference>
<dbReference type="GO" id="GO:0009523">
    <property type="term" value="C:photosystem II"/>
    <property type="evidence" value="ECO:0007669"/>
    <property type="project" value="UniProtKB-KW"/>
</dbReference>
<dbReference type="GO" id="GO:0015979">
    <property type="term" value="P:photosynthesis"/>
    <property type="evidence" value="ECO:0007669"/>
    <property type="project" value="UniProtKB-KW"/>
</dbReference>
<dbReference type="HAMAP" id="MF_01329">
    <property type="entry name" value="PSII_Psb30_Ycf12"/>
    <property type="match status" value="1"/>
</dbReference>
<dbReference type="InterPro" id="IPR010284">
    <property type="entry name" value="PSII_Ycf12_core-subunit"/>
</dbReference>
<dbReference type="NCBIfam" id="NF010239">
    <property type="entry name" value="PRK13686.1"/>
    <property type="match status" value="1"/>
</dbReference>
<dbReference type="Pfam" id="PF05969">
    <property type="entry name" value="PSII_Ycf12"/>
    <property type="match status" value="1"/>
</dbReference>
<feature type="chain" id="PRO_0000242474" description="Photosystem II reaction center protein Psb30">
    <location>
        <begin position="1"/>
        <end position="34"/>
    </location>
</feature>
<feature type="transmembrane region" description="Helical" evidence="1">
    <location>
        <begin position="5"/>
        <end position="25"/>
    </location>
</feature>
<organism>
    <name type="scientific">Tupiella akineta</name>
    <name type="common">Green alga</name>
    <name type="synonym">Pseudendoclonium akinetum</name>
    <dbReference type="NCBI Taxonomy" id="160070"/>
    <lineage>
        <taxon>Eukaryota</taxon>
        <taxon>Viridiplantae</taxon>
        <taxon>Chlorophyta</taxon>
        <taxon>Ulvophyceae</taxon>
        <taxon>OUU clade</taxon>
        <taxon>Ulotrichales</taxon>
        <taxon>Tupiellaceae</taxon>
        <taxon>Tupiella</taxon>
    </lineage>
</organism>
<comment type="function">
    <text evidence="1">A core subunit of photosystem II (PSII), probably helps stabilize the reaction center.</text>
</comment>
<comment type="subunit">
    <text evidence="1">PSII is composed of 1 copy each of membrane proteins PsbA, PsbB, PsbC, PsbD, PsbE, PsbF, PsbH, PsbI, PsbJ, PsbK, PsbL, PsbM, PsbT, PsbX, PsbY, PsbZ, Psb30/Ycf12, peripheral proteins of the oxygen-evolving complex and a large number of cofactors. It forms dimeric complexes.</text>
</comment>
<comment type="subcellular location">
    <subcellularLocation>
        <location evidence="1">Plastid</location>
        <location evidence="1">Chloroplast thylakoid membrane</location>
        <topology evidence="1">Single-pass membrane protein</topology>
    </subcellularLocation>
</comment>
<comment type="similarity">
    <text evidence="1">Belongs to the Psb30/Ycf12 family.</text>
</comment>
<name>PSB30_TUPAK</name>
<keyword id="KW-0150">Chloroplast</keyword>
<keyword id="KW-0472">Membrane</keyword>
<keyword id="KW-0602">Photosynthesis</keyword>
<keyword id="KW-0604">Photosystem II</keyword>
<keyword id="KW-0934">Plastid</keyword>
<keyword id="KW-0793">Thylakoid</keyword>
<keyword id="KW-0812">Transmembrane</keyword>
<keyword id="KW-1133">Transmembrane helix</keyword>
<evidence type="ECO:0000255" key="1">
    <source>
        <dbReference type="HAMAP-Rule" id="MF_01329"/>
    </source>
</evidence>
<protein>
    <recommendedName>
        <fullName evidence="1">Photosystem II reaction center protein Psb30</fullName>
    </recommendedName>
    <alternativeName>
        <fullName evidence="1">Photosystem II reaction center protein Ycf12</fullName>
    </alternativeName>
</protein>
<accession>Q3ZJ17</accession>
<proteinExistence type="inferred from homology"/>
<geneLocation type="chloroplast"/>
<sequence length="34" mass="3604">MNFEVLFQLTALIFVVAAGPLVIVLLASRSNSGL</sequence>